<reference key="1">
    <citation type="journal article" date="2011" name="PLoS Genet.">
        <title>Whole-genome comparison reveals novel genetic elements that characterize the genome of industrial strains of Saccharomyces cerevisiae.</title>
        <authorList>
            <person name="Borneman A.R."/>
            <person name="Desany B.A."/>
            <person name="Riches D."/>
            <person name="Affourtit J.P."/>
            <person name="Forgan A.H."/>
            <person name="Pretorius I.S."/>
            <person name="Egholm M."/>
            <person name="Chambers P.J."/>
        </authorList>
    </citation>
    <scope>NUCLEOTIDE SEQUENCE [LARGE SCALE GENOMIC DNA]</scope>
    <source>
        <strain>AWRI796</strain>
    </source>
</reference>
<feature type="chain" id="PRO_0000410817" description="Protein HRI1">
    <location>
        <begin position="1"/>
        <end position="184"/>
    </location>
</feature>
<feature type="modified residue" description="Phosphoserine" evidence="2">
    <location>
        <position position="143"/>
    </location>
</feature>
<sequence>MPALLKRLLFQVGPHPNERTFTLSSVSTDGHYISLRPFVKPSGDELSFPFEWAFAGTNETVKVNDQGNGVVTQDFNFWLDTNVYLNVPNTHRGEVNTTWKNWDSGCVEETGAVYPFGADKESVSFRELWQPVDPSREDLVIVSPNNEKFSSNARSIVLKVTDEAYDGLVIVIGRWIQXVFVPKE</sequence>
<keyword id="KW-0963">Cytoplasm</keyword>
<keyword id="KW-0539">Nucleus</keyword>
<keyword id="KW-0597">Phosphoprotein</keyword>
<name>HRI1_YEASA</name>
<proteinExistence type="inferred from homology"/>
<dbReference type="EMBL" id="ADVS01000039">
    <property type="protein sequence ID" value="EGA73796.1"/>
    <property type="molecule type" value="Genomic_DNA"/>
</dbReference>
<dbReference type="HOGENOM" id="CLU_097607_0_0_1"/>
<dbReference type="OMA" id="GEVNTTW"/>
<dbReference type="OrthoDB" id="4045395at2759"/>
<dbReference type="GO" id="GO:0005737">
    <property type="term" value="C:cytoplasm"/>
    <property type="evidence" value="ECO:0007669"/>
    <property type="project" value="UniProtKB-SubCell"/>
</dbReference>
<dbReference type="GO" id="GO:0005634">
    <property type="term" value="C:nucleus"/>
    <property type="evidence" value="ECO:0007669"/>
    <property type="project" value="UniProtKB-SubCell"/>
</dbReference>
<dbReference type="CDD" id="cd11692">
    <property type="entry name" value="HRI1_N_like"/>
    <property type="match status" value="1"/>
</dbReference>
<dbReference type="FunFam" id="2.40.128.320:FF:000001">
    <property type="entry name" value="Protein HRI1"/>
    <property type="match status" value="1"/>
</dbReference>
<dbReference type="Gene3D" id="2.40.128.310">
    <property type="entry name" value="Protein HRI1, C-terminal domain"/>
    <property type="match status" value="1"/>
</dbReference>
<dbReference type="Gene3D" id="2.40.128.320">
    <property type="entry name" value="Protein HRI1, N-terminal domain"/>
    <property type="match status" value="1"/>
</dbReference>
<dbReference type="InterPro" id="IPR031818">
    <property type="entry name" value="Hri1"/>
</dbReference>
<dbReference type="InterPro" id="IPR038744">
    <property type="entry name" value="Hri1_N"/>
</dbReference>
<dbReference type="InterPro" id="IPR043047">
    <property type="entry name" value="Hri1_N_sf"/>
</dbReference>
<dbReference type="Pfam" id="PF16815">
    <property type="entry name" value="HRI1"/>
    <property type="match status" value="1"/>
</dbReference>
<gene>
    <name type="primary">HRI1</name>
    <name type="ORF">AWRI796_3362</name>
</gene>
<organism>
    <name type="scientific">Saccharomyces cerevisiae (strain AWRI796)</name>
    <name type="common">Baker's yeast</name>
    <dbReference type="NCBI Taxonomy" id="764097"/>
    <lineage>
        <taxon>Eukaryota</taxon>
        <taxon>Fungi</taxon>
        <taxon>Dikarya</taxon>
        <taxon>Ascomycota</taxon>
        <taxon>Saccharomycotina</taxon>
        <taxon>Saccharomycetes</taxon>
        <taxon>Saccharomycetales</taxon>
        <taxon>Saccharomycetaceae</taxon>
        <taxon>Saccharomyces</taxon>
    </lineage>
</organism>
<evidence type="ECO:0000250" key="1"/>
<evidence type="ECO:0000250" key="2">
    <source>
        <dbReference type="UniProtKB" id="Q05905"/>
    </source>
</evidence>
<evidence type="ECO:0000305" key="3"/>
<comment type="subunit">
    <text evidence="1">Interacts with HRR25. May interact with SEC72.</text>
</comment>
<comment type="subcellular location">
    <subcellularLocation>
        <location evidence="1">Cytoplasm</location>
    </subcellularLocation>
    <subcellularLocation>
        <location evidence="1">Nucleus</location>
    </subcellularLocation>
</comment>
<comment type="similarity">
    <text evidence="3">Belongs to the HRI1 family.</text>
</comment>
<protein>
    <recommendedName>
        <fullName>Protein HRI1</fullName>
    </recommendedName>
    <alternativeName>
        <fullName>HRR25-interacting protein 1</fullName>
    </alternativeName>
</protein>
<accession>E7KFU6</accession>